<keyword id="KW-0007">Acetylation</keyword>
<keyword id="KW-0325">Glycoprotein</keyword>
<keyword id="KW-0333">Golgi apparatus</keyword>
<keyword id="KW-0378">Hydrolase</keyword>
<keyword id="KW-0460">Magnesium</keyword>
<keyword id="KW-0472">Membrane</keyword>
<keyword id="KW-0479">Metal-binding</keyword>
<keyword id="KW-1185">Reference proteome</keyword>
<keyword id="KW-0735">Signal-anchor</keyword>
<keyword id="KW-0812">Transmembrane</keyword>
<keyword id="KW-1133">Transmembrane helix</keyword>
<accession>D4AD37</accession>
<protein>
    <recommendedName>
        <fullName evidence="2">Golgi-resident adenosine 3',5'-bisphosphate 3'-phosphatase</fullName>
        <shortName evidence="2">Golgi-resident PAP phosphatase</shortName>
        <shortName evidence="2">gPAPP</shortName>
        <ecNumber evidence="2">3.1.3.7</ecNumber>
    </recommendedName>
    <alternativeName>
        <fullName>3'(2'), 5'-bisphosphate nucleotidase 2</fullName>
    </alternativeName>
    <alternativeName>
        <fullName evidence="2">Inositol monophosphatase domain-containing protein 1</fullName>
    </alternativeName>
    <alternativeName>
        <fullName evidence="3">Myo-inositol monophosphatase A3</fullName>
    </alternativeName>
    <alternativeName>
        <fullName evidence="2">Phosphoadenosine phosphate 3'-nucleotidase</fullName>
    </alternativeName>
</protein>
<comment type="function">
    <text evidence="2">Exhibits 3'-nucleotidase activity toward adenosine 3',5'-bisphosphate (PAP), namely hydrolyzes adenosine 3',5'-bisphosphate into adenosine 5'-monophosphate (AMP) and a phosphate. May play a role in the formation of skeletal elements derived through endochondral ossification, possibly by clearing adenosine 3',5'-bisphosphate produced by Golgi sulfotransferases during glycosaminoglycan sulfation. Has no activity toward 3'-phosphoadenosine 5'-phosphosulfate (PAPS) or inositol phosphate (IP) substrates including I(1)P, I(1,4)P2, I(1,3,4)P3, I(1,4,5)P3 and I(1,3,4,5)P4.</text>
</comment>
<comment type="catalytic activity">
    <reaction evidence="2">
        <text>adenosine 3',5'-bisphosphate + H2O = AMP + phosphate</text>
        <dbReference type="Rhea" id="RHEA:10040"/>
        <dbReference type="ChEBI" id="CHEBI:15377"/>
        <dbReference type="ChEBI" id="CHEBI:43474"/>
        <dbReference type="ChEBI" id="CHEBI:58343"/>
        <dbReference type="ChEBI" id="CHEBI:456215"/>
        <dbReference type="EC" id="3.1.3.7"/>
    </reaction>
</comment>
<comment type="cofactor">
    <cofactor evidence="1">
        <name>Mg(2+)</name>
        <dbReference type="ChEBI" id="CHEBI:18420"/>
    </cofactor>
</comment>
<comment type="activity regulation">
    <text evidence="2">Strongly inhibited by lithium.</text>
</comment>
<comment type="pathway">
    <text evidence="2">Sulfur metabolism.</text>
</comment>
<comment type="subcellular location">
    <subcellularLocation>
        <location evidence="2 3">Golgi apparatus</location>
    </subcellularLocation>
    <subcellularLocation>
        <location evidence="2 3">Golgi apparatus</location>
        <location evidence="2 3">trans-Golgi network membrane</location>
        <topology evidence="3">Single-pass type II membrane protein</topology>
    </subcellularLocation>
    <text evidence="3">The catalytic core is predicted to reside within the Golgi lumen.</text>
</comment>
<comment type="PTM">
    <text evidence="3">Contains N-linked glycan resistant to endoglycosydase H.</text>
</comment>
<comment type="similarity">
    <text evidence="7">Belongs to the inositol monophosphatase superfamily.</text>
</comment>
<dbReference type="EC" id="3.1.3.7" evidence="2"/>
<dbReference type="EMBL" id="CH473984">
    <property type="protein sequence ID" value="EDM11627.1"/>
    <property type="molecule type" value="Genomic_DNA"/>
</dbReference>
<dbReference type="RefSeq" id="NP_001008772.2">
    <property type="nucleotide sequence ID" value="NM_001008772.2"/>
</dbReference>
<dbReference type="RefSeq" id="XP_008761786.1">
    <property type="nucleotide sequence ID" value="XM_008763564.2"/>
</dbReference>
<dbReference type="RefSeq" id="XP_008774114.1">
    <property type="nucleotide sequence ID" value="XM_008775892.2"/>
</dbReference>
<dbReference type="SMR" id="D4AD37"/>
<dbReference type="FunCoup" id="D4AD37">
    <property type="interactions" value="2186"/>
</dbReference>
<dbReference type="GlyCosmos" id="D4AD37">
    <property type="glycosylation" value="1 site, No reported glycans"/>
</dbReference>
<dbReference type="GlyGen" id="D4AD37">
    <property type="glycosylation" value="1 site"/>
</dbReference>
<dbReference type="iPTMnet" id="D4AD37"/>
<dbReference type="PhosphoSitePlus" id="D4AD37"/>
<dbReference type="jPOST" id="D4AD37"/>
<dbReference type="PeptideAtlas" id="D4AD37"/>
<dbReference type="Ensembl" id="ENSRNOT00000072803.2">
    <property type="protein sequence ID" value="ENSRNOP00000067120.1"/>
    <property type="gene ID" value="ENSRNOG00000046647.4"/>
</dbReference>
<dbReference type="GeneID" id="312952"/>
<dbReference type="KEGG" id="rno:312952"/>
<dbReference type="UCSC" id="RGD:1306455">
    <property type="organism name" value="rat"/>
</dbReference>
<dbReference type="AGR" id="RGD:1306455"/>
<dbReference type="CTD" id="54928"/>
<dbReference type="RGD" id="1306455">
    <property type="gene designation" value="Bpnt2"/>
</dbReference>
<dbReference type="eggNOG" id="KOG3853">
    <property type="taxonomic scope" value="Eukaryota"/>
</dbReference>
<dbReference type="GeneTree" id="ENSGT00940000160216"/>
<dbReference type="HOGENOM" id="CLU_034742_0_0_1"/>
<dbReference type="InParanoid" id="D4AD37"/>
<dbReference type="OrthoDB" id="43799at9989"/>
<dbReference type="PhylomeDB" id="D4AD37"/>
<dbReference type="TreeFam" id="TF314300"/>
<dbReference type="Reactome" id="R-RNO-156584">
    <property type="pathway name" value="Cytosolic sulfonation of small molecules"/>
</dbReference>
<dbReference type="PRO" id="PR:D4AD37"/>
<dbReference type="Proteomes" id="UP000002494">
    <property type="component" value="Chromosome 5"/>
</dbReference>
<dbReference type="Proteomes" id="UP000234681">
    <property type="component" value="Chromosome 5"/>
</dbReference>
<dbReference type="Bgee" id="ENSRNOG00000027079">
    <property type="expression patterns" value="Expressed in testis and 4 other cell types or tissues"/>
</dbReference>
<dbReference type="ExpressionAtlas" id="D4AD37">
    <property type="expression patterns" value="baseline and differential"/>
</dbReference>
<dbReference type="GO" id="GO:0012505">
    <property type="term" value="C:endomembrane system"/>
    <property type="evidence" value="ECO:0000318"/>
    <property type="project" value="GO_Central"/>
</dbReference>
<dbReference type="GO" id="GO:0032588">
    <property type="term" value="C:trans-Golgi network membrane"/>
    <property type="evidence" value="ECO:0000250"/>
    <property type="project" value="UniProtKB"/>
</dbReference>
<dbReference type="GO" id="GO:0008441">
    <property type="term" value="F:3'(2'),5'-bisphosphate nucleotidase activity"/>
    <property type="evidence" value="ECO:0007669"/>
    <property type="project" value="UniProtKB-EC"/>
</dbReference>
<dbReference type="GO" id="GO:0097657">
    <property type="term" value="F:3',5'-nucleotide bisphosphate phosphatase activity"/>
    <property type="evidence" value="ECO:0000250"/>
    <property type="project" value="UniProtKB"/>
</dbReference>
<dbReference type="GO" id="GO:0008254">
    <property type="term" value="F:3'-nucleotidase activity"/>
    <property type="evidence" value="ECO:0000266"/>
    <property type="project" value="RGD"/>
</dbReference>
<dbReference type="GO" id="GO:0046872">
    <property type="term" value="F:metal ion binding"/>
    <property type="evidence" value="ECO:0007669"/>
    <property type="project" value="UniProtKB-KW"/>
</dbReference>
<dbReference type="GO" id="GO:0002063">
    <property type="term" value="P:chondrocyte development"/>
    <property type="evidence" value="ECO:0000266"/>
    <property type="project" value="RGD"/>
</dbReference>
<dbReference type="GO" id="GO:0042733">
    <property type="term" value="P:embryonic digit morphogenesis"/>
    <property type="evidence" value="ECO:0000266"/>
    <property type="project" value="RGD"/>
</dbReference>
<dbReference type="GO" id="GO:0001958">
    <property type="term" value="P:endochondral ossification"/>
    <property type="evidence" value="ECO:0000266"/>
    <property type="project" value="RGD"/>
</dbReference>
<dbReference type="GO" id="GO:0046854">
    <property type="term" value="P:phosphatidylinositol phosphate biosynthetic process"/>
    <property type="evidence" value="ECO:0007669"/>
    <property type="project" value="InterPro"/>
</dbReference>
<dbReference type="GO" id="GO:0009791">
    <property type="term" value="P:post-embryonic development"/>
    <property type="evidence" value="ECO:0000266"/>
    <property type="project" value="RGD"/>
</dbReference>
<dbReference type="GO" id="GO:0001501">
    <property type="term" value="P:skeletal system development"/>
    <property type="evidence" value="ECO:0000266"/>
    <property type="project" value="RGD"/>
</dbReference>
<dbReference type="CDD" id="cd01640">
    <property type="entry name" value="IPPase"/>
    <property type="match status" value="1"/>
</dbReference>
<dbReference type="FunFam" id="3.30.540.10:FF:000012">
    <property type="entry name" value="Blast:Putative inositol monophosphatase 3"/>
    <property type="match status" value="1"/>
</dbReference>
<dbReference type="FunFam" id="3.40.190.80:FF:000007">
    <property type="entry name" value="Blast:Putative inositol monophosphatase 3"/>
    <property type="match status" value="1"/>
</dbReference>
<dbReference type="Gene3D" id="3.40.190.80">
    <property type="match status" value="1"/>
</dbReference>
<dbReference type="Gene3D" id="3.30.540.10">
    <property type="entry name" value="Fructose-1,6-Bisphosphatase, subunit A, domain 1"/>
    <property type="match status" value="1"/>
</dbReference>
<dbReference type="InterPro" id="IPR050725">
    <property type="entry name" value="CysQ/Inositol_MonoPase"/>
</dbReference>
<dbReference type="InterPro" id="IPR000760">
    <property type="entry name" value="Inositol_monophosphatase-like"/>
</dbReference>
<dbReference type="InterPro" id="IPR020550">
    <property type="entry name" value="Inositol_monophosphatase_CS"/>
</dbReference>
<dbReference type="PANTHER" id="PTHR43028">
    <property type="entry name" value="3'(2'),5'-BISPHOSPHATE NUCLEOTIDASE 1"/>
    <property type="match status" value="1"/>
</dbReference>
<dbReference type="PANTHER" id="PTHR43028:SF6">
    <property type="entry name" value="GOLGI-RESIDENT ADENOSINE 3',5'-BISPHOSPHATE 3'-PHOSPHATASE"/>
    <property type="match status" value="1"/>
</dbReference>
<dbReference type="Pfam" id="PF00459">
    <property type="entry name" value="Inositol_P"/>
    <property type="match status" value="1"/>
</dbReference>
<dbReference type="SUPFAM" id="SSF56655">
    <property type="entry name" value="Carbohydrate phosphatase"/>
    <property type="match status" value="1"/>
</dbReference>
<dbReference type="PROSITE" id="PS00630">
    <property type="entry name" value="IMP_2"/>
    <property type="match status" value="1"/>
</dbReference>
<feature type="chain" id="PRO_0000413415" description="Golgi-resident adenosine 3',5'-bisphosphate 3'-phosphatase">
    <location>
        <begin position="1"/>
        <end position="356"/>
    </location>
</feature>
<feature type="topological domain" description="Cytoplasmic" evidence="5">
    <location>
        <begin position="1"/>
        <end position="12"/>
    </location>
</feature>
<feature type="transmembrane region" description="Helical" evidence="5">
    <location>
        <begin position="13"/>
        <end position="33"/>
    </location>
</feature>
<feature type="topological domain" description="Lumenal" evidence="5">
    <location>
        <begin position="34"/>
        <end position="356"/>
    </location>
</feature>
<feature type="region of interest" description="Disordered" evidence="6">
    <location>
        <begin position="82"/>
        <end position="104"/>
    </location>
</feature>
<feature type="active site" description="Proton acceptor" evidence="4">
    <location>
        <position position="108"/>
    </location>
</feature>
<feature type="active site" description="Proton acceptor" evidence="4">
    <location>
        <position position="177"/>
    </location>
</feature>
<feature type="binding site" evidence="4">
    <location>
        <position position="131"/>
    </location>
    <ligand>
        <name>Mg(2+)</name>
        <dbReference type="ChEBI" id="CHEBI:18420"/>
        <label>1</label>
    </ligand>
</feature>
<feature type="binding site" evidence="4">
    <location>
        <position position="131"/>
    </location>
    <ligand>
        <name>Mg(2+)</name>
        <dbReference type="ChEBI" id="CHEBI:18420"/>
        <label>3</label>
    </ligand>
</feature>
<feature type="binding site" evidence="4">
    <location>
        <position position="172"/>
    </location>
    <ligand>
        <name>Mg(2+)</name>
        <dbReference type="ChEBI" id="CHEBI:18420"/>
        <label>1</label>
    </ligand>
</feature>
<feature type="binding site" evidence="4">
    <location>
        <position position="172"/>
    </location>
    <ligand>
        <name>Mg(2+)</name>
        <dbReference type="ChEBI" id="CHEBI:18420"/>
        <label>2</label>
    </ligand>
</feature>
<feature type="binding site" evidence="4">
    <location>
        <position position="174"/>
    </location>
    <ligand>
        <name>Mg(2+)</name>
        <dbReference type="ChEBI" id="CHEBI:18420"/>
        <label>1</label>
    </ligand>
</feature>
<feature type="binding site" evidence="4">
    <location>
        <position position="175"/>
    </location>
    <ligand>
        <name>Mg(2+)</name>
        <dbReference type="ChEBI" id="CHEBI:18420"/>
        <label>2</label>
    </ligand>
</feature>
<feature type="binding site" evidence="4">
    <location>
        <position position="240"/>
    </location>
    <ligand>
        <name>AMP</name>
        <dbReference type="ChEBI" id="CHEBI:456215"/>
    </ligand>
</feature>
<feature type="binding site" evidence="4">
    <location>
        <position position="243"/>
    </location>
    <ligand>
        <name>AMP</name>
        <dbReference type="ChEBI" id="CHEBI:456215"/>
    </ligand>
</feature>
<feature type="binding site" evidence="4">
    <location>
        <position position="266"/>
    </location>
    <ligand>
        <name>AMP</name>
        <dbReference type="ChEBI" id="CHEBI:456215"/>
    </ligand>
</feature>
<feature type="binding site" evidence="4">
    <location>
        <position position="270"/>
    </location>
    <ligand>
        <name>AMP</name>
        <dbReference type="ChEBI" id="CHEBI:456215"/>
    </ligand>
</feature>
<feature type="binding site" evidence="4">
    <location>
        <position position="298"/>
    </location>
    <ligand>
        <name>Mg(2+)</name>
        <dbReference type="ChEBI" id="CHEBI:18420"/>
        <label>2</label>
    </ligand>
</feature>
<feature type="modified residue" description="N-acetylmethionine" evidence="3">
    <location>
        <position position="1"/>
    </location>
</feature>
<feature type="glycosylation site" description="N-linked (GlcNAc...) asparagine" evidence="7">
    <location>
        <position position="257"/>
    </location>
</feature>
<name>IMPA3_RAT</name>
<proteinExistence type="inferred from homology"/>
<gene>
    <name type="primary">Bpnt2</name>
    <name type="synonym">Impa3</name>
    <name type="synonym">Impad1</name>
</gene>
<organism>
    <name type="scientific">Rattus norvegicus</name>
    <name type="common">Rat</name>
    <dbReference type="NCBI Taxonomy" id="10116"/>
    <lineage>
        <taxon>Eukaryota</taxon>
        <taxon>Metazoa</taxon>
        <taxon>Chordata</taxon>
        <taxon>Craniata</taxon>
        <taxon>Vertebrata</taxon>
        <taxon>Euteleostomi</taxon>
        <taxon>Mammalia</taxon>
        <taxon>Eutheria</taxon>
        <taxon>Euarchontoglires</taxon>
        <taxon>Glires</taxon>
        <taxon>Rodentia</taxon>
        <taxon>Myomorpha</taxon>
        <taxon>Muroidea</taxon>
        <taxon>Muridae</taxon>
        <taxon>Murinae</taxon>
        <taxon>Rattus</taxon>
    </lineage>
</organism>
<reference key="1">
    <citation type="submission" date="2005-07" db="EMBL/GenBank/DDBJ databases">
        <authorList>
            <person name="Mural R.J."/>
            <person name="Adams M.D."/>
            <person name="Myers E.W."/>
            <person name="Smith H.O."/>
            <person name="Venter J.C."/>
        </authorList>
    </citation>
    <scope>NUCLEOTIDE SEQUENCE [LARGE SCALE GENOMIC DNA]</scope>
</reference>
<sequence length="356" mass="38569">MAPMGIRLSPLGVAVFFLLGLGVLYHLYSGFLAGRFSLFGLGGEPAGGAAEVAVDGGTVDLREMLAVAVLAAERGGDEVRRVRESNVLHEKSKGKTREGAEDKMTSGDVLSNRKMFYLLKTAFPNVQINTEEHVDASDKEVIVWNRKIPEDILKEIAAPKEVPAESVTVWIDPLDATQEYTEDLRKYVTTMVCVAVNGKPVLGVIHKPFSEYTAWAMVDSGSNVKARSSYNEKTPKIIVSRSHAGMVKQVALQTFGNQTLIIPAGGAGYKVLALLDVPDMTQEKADLYIHVTYIKKWDICAGNAILKALGGHMTTLSGEEISYTGSDGIEGGLLASIRMNHQALVRKLPDLEKSGH</sequence>
<evidence type="ECO:0000250" key="1"/>
<evidence type="ECO:0000250" key="2">
    <source>
        <dbReference type="UniProtKB" id="Q80V26"/>
    </source>
</evidence>
<evidence type="ECO:0000250" key="3">
    <source>
        <dbReference type="UniProtKB" id="Q9NX62"/>
    </source>
</evidence>
<evidence type="ECO:0000250" key="4">
    <source>
        <dbReference type="UniProtKB" id="Q9Z1N4"/>
    </source>
</evidence>
<evidence type="ECO:0000255" key="5"/>
<evidence type="ECO:0000256" key="6">
    <source>
        <dbReference type="SAM" id="MobiDB-lite"/>
    </source>
</evidence>
<evidence type="ECO:0000305" key="7"/>